<keyword id="KW-1003">Cell membrane</keyword>
<keyword id="KW-0168">Coated pit</keyword>
<keyword id="KW-0903">Direct protein sequencing</keyword>
<keyword id="KW-0254">Endocytosis</keyword>
<keyword id="KW-0446">Lipid-binding</keyword>
<keyword id="KW-0472">Membrane</keyword>
<keyword id="KW-0653">Protein transport</keyword>
<keyword id="KW-1185">Reference proteome</keyword>
<keyword id="KW-0813">Transport</keyword>
<protein>
    <recommendedName>
        <fullName evidence="2">AP-2 complex subunit alpha-2</fullName>
    </recommendedName>
    <alternativeName>
        <fullName>100 kDa coated vesicle protein C</fullName>
    </alternativeName>
    <alternativeName>
        <fullName>Adaptor protein complex AP-2 subunit alpha-2</fullName>
    </alternativeName>
    <alternativeName>
        <fullName>Adaptor-related protein complex 2 subunit alpha-2</fullName>
    </alternativeName>
    <alternativeName>
        <fullName>Alpha-adaptin C</fullName>
    </alternativeName>
    <alternativeName>
        <fullName>Alpha2-adaptin</fullName>
    </alternativeName>
    <alternativeName>
        <fullName>Clathrin assembly protein complex 2 alpha-C large chain</fullName>
    </alternativeName>
    <alternativeName>
        <fullName>Plasma membrane adaptor HA2/AP2 adaptin alpha C subunit</fullName>
    </alternativeName>
</protein>
<accession>Q0VCK5</accession>
<sequence length="938" mass="103769">MPAVSKGDGMRGLAVFISDIRNCKSKEAEIKRINKELANIRSKFKGDKALDGYSKKKYVCKLLFIFLLGHDIDFGHMEAVNLLSSNRYTEKQIGYLFISVLVNSNSELIRLINNAIKNDLASRNPTFMGLALHCIANVGSREMAEAFAGEIPKILVAGDTMDSVKQSAALCLLRLHRASPDLVPVGDWTSRVVHLLNDQHLGVVTAATSLITTLAQKNPEEFKTSVSLAVSRLSRIVTSASTDLQDYTYYFVPAPWLSVKLLRLLQCYPPPEDPAVRGRLTECLEAILNKAQEPPKSKKVQHSNAKNAVLFEAISLVTHHDSEPNLLVRACNQLGQFLQHRETNLRYLALESMCTLASSEFSHEAVKTHIETVINALKTERDVSVRQRAVDLLYAMCDRSNAQQIVAEMLSYLETADYSIREEIVLKVAILAEKYAVDYTWYVDTILNLIRIAGDYVSEEVWYRVIQIVINRDDVQGYAAKTVFEALQAPACHENLVKVGGYILGEFGNLIAGDPRSSPLTQFHLLHSKFHLCSVPTRALLLSTYIKFVNLFPEVKGTIQDVLRSDSQLKNADVELQQRAVEYLRLSTVASTDILATVLEEMPPFPERESSILAKLKKKKGPSTVTDLEEAKRERSADVNGGPEPALASTSAVSTPSPSADLLGLGAAPPVPAGPPPSSGGLLVDVFSDSPSAAAPLAPGSEDNFARFVCKNNGVLFENQLLQIGLKSEFRQNLGRMFIFYGNKTSTQFLNFTPTLICSDDLQANLSLQTKPVDPTVDGGAQVQQAVNIECVSDFTEAPVLNIQFRYGGTFQNVSVKLPITLNKFFQPTEMASQDFFQRWKQLSNPQQEVQSIFKAKHPMDTEVTKAKIIGFGSALLEEVDPNPANFVGAGIIHTRTAQIGCLLRLEPNLQAQMYRLTLRTSRETVSQRLCELLSEQF</sequence>
<evidence type="ECO:0000250" key="1"/>
<evidence type="ECO:0000250" key="2">
    <source>
        <dbReference type="UniProtKB" id="O94973"/>
    </source>
</evidence>
<evidence type="ECO:0000250" key="3">
    <source>
        <dbReference type="UniProtKB" id="P17427"/>
    </source>
</evidence>
<evidence type="ECO:0000250" key="4">
    <source>
        <dbReference type="UniProtKB" id="P18484"/>
    </source>
</evidence>
<evidence type="ECO:0000256" key="5">
    <source>
        <dbReference type="SAM" id="MobiDB-lite"/>
    </source>
</evidence>
<evidence type="ECO:0000305" key="6"/>
<name>AP2A2_BOVIN</name>
<comment type="function">
    <text evidence="1 3">Component of the adaptor protein complex 2 (AP-2). Adaptor protein complexes function in protein transport via transport vesicles in different membrane traffic pathways. Adaptor protein complexes are vesicle coat components and appear to be involved in cargo selection and vesicle formation. AP-2 is involved in clathrin-dependent endocytosis in which cargo proteins are incorporated into vesicles surrounded by clathrin (clathrin-coated vesicles, CCVs) which are destined for fusion with the early endosome. The clathrin lattice serves as a mechanical scaffold but is itself unable to bind directly to membrane components. Clathrin-associated adaptor protein (AP) complexes which can bind directly to both the clathrin lattice and to the lipid and protein components of membranes are considered to be the major clathrin adaptors contributing the CCV formation. AP-2 also serves as a cargo receptor to selectively sort the membrane proteins involved in receptor-mediated endocytosis. AP-2 seems to play a role in the recycling of synaptic vesicle membranes from the presynaptic surface. AP-2 recognizes Y-X-X-[FILMV] (Y-X-X-Phi) and [ED]-X-X-X-L-[LI] endocytosis signal motifs within the cytosolic tails of transmembrane cargo molecules. AP-2 may also play a role in maintaining normal post-endocytic trafficking through the ARF6-regulated, non-clathrin pathway. During long-term potentiation in hippocampal neurons, AP-2 is responsible for the endocytosis of ADAM10 (By similarity). The AP-2 alpha subunit binds polyphosphoinositide-containing lipids, positioning AP-2 on the membrane. The AP-2 alpha subunit acts via its C-terminal appendage domain as a scaffolding platform for endocytic accessory proteins. The AP-2 alpha and AP-2 sigma subunits are thought to contribute to the recognition of the [ED]-X-X-X-L-[LI] motif (By similarity).</text>
</comment>
<comment type="subunit">
    <text evidence="2 3">Adaptor protein complex 2 (AP-2) is a heterotetramer composed of two large adaptins (alpha-type subunit AP2A1 or AP2A2 and beta-type subunit AP2B1), a medium adaptin (mu-type subunit AP2M1) and a small adaptin (sigma-type subunit AP2S1). Binds clathrin (By similarity). Binds EPN1, EPS15, AMPH, SNAP91 and BIN1 (By similarity). Interacts with HIP1 (By similarity). Interacts with DGKD (By similarity). Interacts with DENND1A, DENND1B and DENND1C (By similarity). Interacts with FCHO1 (By similarity). Interacts with ATAT1; this interaction is required for efficient alpha-tubulin acetylation by ATAT1 (By similarity). Interacts with KIAA1107 (By similarity). Together with AP2B1 and AP2M1, it interacts with ADAM10; this interaction facilitates ADAM10 endocytosis from the plasma membrane during long-term potentiation in hippocampal neurons (By similarity). Interacts with CLN3 (via dileucine motif) (By similarity). Interacts with ABCB11; this interaction regulates cell membrane expression of ABCB11 through its internalization in a clathrin-dependent manner and its subsequent degradation (By similarity). Interacts with DNAJC6 (By similarity).</text>
</comment>
<comment type="subcellular location">
    <subcellularLocation>
        <location evidence="3">Cell membrane</location>
        <topology evidence="3">Peripheral membrane protein</topology>
        <orientation evidence="3">Cytoplasmic side</orientation>
    </subcellularLocation>
    <subcellularLocation>
        <location evidence="3">Membrane</location>
        <location evidence="3">Coated pit</location>
        <topology evidence="3">Peripheral membrane protein</topology>
        <orientation evidence="3">Cytoplasmic side</orientation>
    </subcellularLocation>
    <text evidence="3">AP-2 appears to be excluded from internalizing CCVs and to disengage from sites of endocytosis seconds before internalization of the nascent CCV.</text>
</comment>
<comment type="similarity">
    <text evidence="6">Belongs to the adaptor complexes large subunit family.</text>
</comment>
<organism>
    <name type="scientific">Bos taurus</name>
    <name type="common">Bovine</name>
    <dbReference type="NCBI Taxonomy" id="9913"/>
    <lineage>
        <taxon>Eukaryota</taxon>
        <taxon>Metazoa</taxon>
        <taxon>Chordata</taxon>
        <taxon>Craniata</taxon>
        <taxon>Vertebrata</taxon>
        <taxon>Euteleostomi</taxon>
        <taxon>Mammalia</taxon>
        <taxon>Eutheria</taxon>
        <taxon>Laurasiatheria</taxon>
        <taxon>Artiodactyla</taxon>
        <taxon>Ruminantia</taxon>
        <taxon>Pecora</taxon>
        <taxon>Bovidae</taxon>
        <taxon>Bovinae</taxon>
        <taxon>Bos</taxon>
    </lineage>
</organism>
<gene>
    <name evidence="2" type="primary">AP2A2</name>
</gene>
<dbReference type="EMBL" id="BC120121">
    <property type="protein sequence ID" value="AAI20122.1"/>
    <property type="molecule type" value="mRNA"/>
</dbReference>
<dbReference type="RefSeq" id="NP_001069170.1">
    <property type="nucleotide sequence ID" value="NM_001075702.1"/>
</dbReference>
<dbReference type="RefSeq" id="XP_059738893.1">
    <property type="nucleotide sequence ID" value="XM_059882910.1"/>
</dbReference>
<dbReference type="SMR" id="Q0VCK5"/>
<dbReference type="BioGRID" id="171839">
    <property type="interactions" value="2"/>
</dbReference>
<dbReference type="FunCoup" id="Q0VCK5">
    <property type="interactions" value="3790"/>
</dbReference>
<dbReference type="STRING" id="9913.ENSBTAP00000059139"/>
<dbReference type="PaxDb" id="9913-ENSBTAP00000048343"/>
<dbReference type="GeneID" id="515216"/>
<dbReference type="KEGG" id="bta:515216"/>
<dbReference type="CTD" id="161"/>
<dbReference type="VEuPathDB" id="HostDB:ENSBTAG00000009915"/>
<dbReference type="eggNOG" id="KOG1077">
    <property type="taxonomic scope" value="Eukaryota"/>
</dbReference>
<dbReference type="HOGENOM" id="CLU_003824_1_1_1"/>
<dbReference type="InParanoid" id="Q0VCK5"/>
<dbReference type="OrthoDB" id="413467at2759"/>
<dbReference type="Reactome" id="R-BTA-177504">
    <property type="pathway name" value="Retrograde neurotrophin signalling"/>
</dbReference>
<dbReference type="Reactome" id="R-BTA-2132295">
    <property type="pathway name" value="MHC class II antigen presentation"/>
</dbReference>
<dbReference type="Reactome" id="R-BTA-416993">
    <property type="pathway name" value="Trafficking of GluR2-containing AMPA receptors"/>
</dbReference>
<dbReference type="Reactome" id="R-BTA-437239">
    <property type="pathway name" value="Recycling pathway of L1"/>
</dbReference>
<dbReference type="Reactome" id="R-BTA-5099900">
    <property type="pathway name" value="WNT5A-dependent internalization of FZD4"/>
</dbReference>
<dbReference type="Reactome" id="R-BTA-5140745">
    <property type="pathway name" value="WNT5A-dependent internalization of FZD2, FZD5 and ROR2"/>
</dbReference>
<dbReference type="Reactome" id="R-BTA-6798695">
    <property type="pathway name" value="Neutrophil degranulation"/>
</dbReference>
<dbReference type="Reactome" id="R-BTA-8856825">
    <property type="pathway name" value="Cargo recognition for clathrin-mediated endocytosis"/>
</dbReference>
<dbReference type="Reactome" id="R-BTA-8856828">
    <property type="pathway name" value="Clathrin-mediated endocytosis"/>
</dbReference>
<dbReference type="Reactome" id="R-BTA-8866427">
    <property type="pathway name" value="VLDLR internalisation and degradation"/>
</dbReference>
<dbReference type="Reactome" id="R-BTA-8964038">
    <property type="pathway name" value="LDL clearance"/>
</dbReference>
<dbReference type="Proteomes" id="UP000009136">
    <property type="component" value="Chromosome 29"/>
</dbReference>
<dbReference type="Bgee" id="ENSBTAG00000009915">
    <property type="expression patterns" value="Expressed in retina and 106 other cell types or tissues"/>
</dbReference>
<dbReference type="GO" id="GO:0030122">
    <property type="term" value="C:AP-2 adaptor complex"/>
    <property type="evidence" value="ECO:0000314"/>
    <property type="project" value="BHF-UCL"/>
</dbReference>
<dbReference type="GO" id="GO:0098793">
    <property type="term" value="C:presynapse"/>
    <property type="evidence" value="ECO:0007669"/>
    <property type="project" value="GOC"/>
</dbReference>
<dbReference type="GO" id="GO:0035615">
    <property type="term" value="F:clathrin adaptor activity"/>
    <property type="evidence" value="ECO:0000318"/>
    <property type="project" value="GO_Central"/>
</dbReference>
<dbReference type="GO" id="GO:0097718">
    <property type="term" value="F:disordered domain specific binding"/>
    <property type="evidence" value="ECO:0007669"/>
    <property type="project" value="Ensembl"/>
</dbReference>
<dbReference type="GO" id="GO:0008289">
    <property type="term" value="F:lipid binding"/>
    <property type="evidence" value="ECO:0007669"/>
    <property type="project" value="UniProtKB-KW"/>
</dbReference>
<dbReference type="GO" id="GO:0019901">
    <property type="term" value="F:protein kinase binding"/>
    <property type="evidence" value="ECO:0007669"/>
    <property type="project" value="Ensembl"/>
</dbReference>
<dbReference type="GO" id="GO:0048268">
    <property type="term" value="P:clathrin coat assembly"/>
    <property type="evidence" value="ECO:0000305"/>
    <property type="project" value="BHF-UCL"/>
</dbReference>
<dbReference type="GO" id="GO:0072583">
    <property type="term" value="P:clathrin-dependent endocytosis"/>
    <property type="evidence" value="ECO:0000250"/>
    <property type="project" value="UniProtKB"/>
</dbReference>
<dbReference type="GO" id="GO:0006886">
    <property type="term" value="P:intracellular protein transport"/>
    <property type="evidence" value="ECO:0007669"/>
    <property type="project" value="InterPro"/>
</dbReference>
<dbReference type="GO" id="GO:0048488">
    <property type="term" value="P:synaptic vesicle endocytosis"/>
    <property type="evidence" value="ECO:0007669"/>
    <property type="project" value="Ensembl"/>
</dbReference>
<dbReference type="FunFam" id="1.25.10.10:FF:000020">
    <property type="entry name" value="AP-2 complex subunit alpha"/>
    <property type="match status" value="1"/>
</dbReference>
<dbReference type="FunFam" id="2.60.40.1230:FF:000003">
    <property type="entry name" value="AP-2 complex subunit alpha"/>
    <property type="match status" value="1"/>
</dbReference>
<dbReference type="FunFam" id="3.30.310.10:FF:000004">
    <property type="entry name" value="AP-2 complex subunit alpha"/>
    <property type="match status" value="1"/>
</dbReference>
<dbReference type="Gene3D" id="2.60.40.1230">
    <property type="match status" value="1"/>
</dbReference>
<dbReference type="Gene3D" id="1.25.10.10">
    <property type="entry name" value="Leucine-rich Repeat Variant"/>
    <property type="match status" value="1"/>
</dbReference>
<dbReference type="Gene3D" id="3.30.310.10">
    <property type="entry name" value="TATA-Binding Protein"/>
    <property type="match status" value="1"/>
</dbReference>
<dbReference type="InterPro" id="IPR050840">
    <property type="entry name" value="Adaptor_Complx_Large_Subunit"/>
</dbReference>
<dbReference type="InterPro" id="IPR017104">
    <property type="entry name" value="AP2_complex_asu"/>
</dbReference>
<dbReference type="InterPro" id="IPR011989">
    <property type="entry name" value="ARM-like"/>
</dbReference>
<dbReference type="InterPro" id="IPR016024">
    <property type="entry name" value="ARM-type_fold"/>
</dbReference>
<dbReference type="InterPro" id="IPR002553">
    <property type="entry name" value="Clathrin/coatomer_adapt-like_N"/>
</dbReference>
<dbReference type="InterPro" id="IPR003164">
    <property type="entry name" value="Clathrin_a-adaptin_app_sub_C"/>
</dbReference>
<dbReference type="InterPro" id="IPR008152">
    <property type="entry name" value="Clathrin_a/b/g-adaptin_app_Ig"/>
</dbReference>
<dbReference type="InterPro" id="IPR013041">
    <property type="entry name" value="Clathrin_app_Ig-like_sf"/>
</dbReference>
<dbReference type="InterPro" id="IPR009028">
    <property type="entry name" value="Coatomer/calthrin_app_sub_C"/>
</dbReference>
<dbReference type="InterPro" id="IPR012295">
    <property type="entry name" value="TBP_dom_sf"/>
</dbReference>
<dbReference type="PANTHER" id="PTHR22780">
    <property type="entry name" value="ADAPTIN, ALPHA/GAMMA/EPSILON"/>
    <property type="match status" value="1"/>
</dbReference>
<dbReference type="Pfam" id="PF01602">
    <property type="entry name" value="Adaptin_N"/>
    <property type="match status" value="1"/>
</dbReference>
<dbReference type="Pfam" id="PF02296">
    <property type="entry name" value="Alpha_adaptin_C"/>
    <property type="match status" value="1"/>
</dbReference>
<dbReference type="Pfam" id="PF02883">
    <property type="entry name" value="Alpha_adaptinC2"/>
    <property type="match status" value="1"/>
</dbReference>
<dbReference type="PIRSF" id="PIRSF037091">
    <property type="entry name" value="AP2_complex_alpha"/>
    <property type="match status" value="1"/>
</dbReference>
<dbReference type="SMART" id="SM00809">
    <property type="entry name" value="Alpha_adaptinC2"/>
    <property type="match status" value="1"/>
</dbReference>
<dbReference type="SUPFAM" id="SSF48371">
    <property type="entry name" value="ARM repeat"/>
    <property type="match status" value="1"/>
</dbReference>
<dbReference type="SUPFAM" id="SSF49348">
    <property type="entry name" value="Clathrin adaptor appendage domain"/>
    <property type="match status" value="1"/>
</dbReference>
<dbReference type="SUPFAM" id="SSF55711">
    <property type="entry name" value="Subdomain of clathrin and coatomer appendage domain"/>
    <property type="match status" value="1"/>
</dbReference>
<proteinExistence type="evidence at protein level"/>
<feature type="initiator methionine" description="Removed" evidence="4">
    <location>
        <position position="1"/>
    </location>
</feature>
<feature type="chain" id="PRO_0000283799" description="AP-2 complex subunit alpha-2">
    <location>
        <begin position="2"/>
        <end position="938"/>
    </location>
</feature>
<feature type="region of interest" description="Disordered" evidence="5">
    <location>
        <begin position="616"/>
        <end position="677"/>
    </location>
</feature>
<feature type="compositionally biased region" description="Low complexity" evidence="5">
    <location>
        <begin position="645"/>
        <end position="668"/>
    </location>
</feature>
<feature type="binding site" evidence="4">
    <location>
        <begin position="11"/>
        <end position="12"/>
    </location>
    <ligand>
        <name>a 1,2-diacyl-sn-glycero-3-phospho-(1D-myo-inositol-3,4,5-trisphosphate)</name>
        <dbReference type="ChEBI" id="CHEBI:57836"/>
    </ligand>
</feature>
<feature type="binding site" evidence="4">
    <location>
        <position position="43"/>
    </location>
    <ligand>
        <name>a 1,2-diacyl-sn-glycero-3-phospho-(1D-myo-inositol-3,4,5-trisphosphate)</name>
        <dbReference type="ChEBI" id="CHEBI:57836"/>
    </ligand>
</feature>
<feature type="binding site" evidence="4">
    <location>
        <position position="53"/>
    </location>
    <ligand>
        <name>a 1,2-diacyl-sn-glycero-3-phospho-(1D-myo-inositol-3,4,5-trisphosphate)</name>
        <dbReference type="ChEBI" id="CHEBI:57836"/>
    </ligand>
</feature>
<feature type="binding site" evidence="4">
    <location>
        <begin position="57"/>
        <end position="61"/>
    </location>
    <ligand>
        <name>a 1,2-diacyl-sn-glycero-3-phospho-(1D-myo-inositol-3,4,5-trisphosphate)</name>
        <dbReference type="ChEBI" id="CHEBI:57836"/>
    </ligand>
</feature>
<reference key="1">
    <citation type="submission" date="2006-08" db="EMBL/GenBank/DDBJ databases">
        <authorList>
            <consortium name="NIH - Mammalian Gene Collection (MGC) project"/>
        </authorList>
    </citation>
    <scope>NUCLEOTIDE SEQUENCE [LARGE SCALE MRNA]</scope>
    <source>
        <strain>Hereford</strain>
        <tissue>Fetal pons</tissue>
    </source>
</reference>
<reference key="2">
    <citation type="journal article" date="1989" name="J. Cell Biol.">
        <title>Cloning of cDNAs encoding two related 100-kD coated vesicle proteins (alpha-adaptins).</title>
        <authorList>
            <person name="Robinson M.S."/>
        </authorList>
    </citation>
    <scope>PROTEIN SEQUENCE OF 2-17</scope>
</reference>